<reference key="1">
    <citation type="journal article" date="2004" name="Proc. Natl. Acad. Sci. U.S.A.">
        <title>Genomic plasticity of the causative agent of melioidosis, Burkholderia pseudomallei.</title>
        <authorList>
            <person name="Holden M.T.G."/>
            <person name="Titball R.W."/>
            <person name="Peacock S.J."/>
            <person name="Cerdeno-Tarraga A.-M."/>
            <person name="Atkins T."/>
            <person name="Crossman L.C."/>
            <person name="Pitt T."/>
            <person name="Churcher C."/>
            <person name="Mungall K.L."/>
            <person name="Bentley S.D."/>
            <person name="Sebaihia M."/>
            <person name="Thomson N.R."/>
            <person name="Bason N."/>
            <person name="Beacham I.R."/>
            <person name="Brooks K."/>
            <person name="Brown K.A."/>
            <person name="Brown N.F."/>
            <person name="Challis G.L."/>
            <person name="Cherevach I."/>
            <person name="Chillingworth T."/>
            <person name="Cronin A."/>
            <person name="Crossett B."/>
            <person name="Davis P."/>
            <person name="DeShazer D."/>
            <person name="Feltwell T."/>
            <person name="Fraser A."/>
            <person name="Hance Z."/>
            <person name="Hauser H."/>
            <person name="Holroyd S."/>
            <person name="Jagels K."/>
            <person name="Keith K.E."/>
            <person name="Maddison M."/>
            <person name="Moule S."/>
            <person name="Price C."/>
            <person name="Quail M.A."/>
            <person name="Rabbinowitsch E."/>
            <person name="Rutherford K."/>
            <person name="Sanders M."/>
            <person name="Simmonds M."/>
            <person name="Songsivilai S."/>
            <person name="Stevens K."/>
            <person name="Tumapa S."/>
            <person name="Vesaratchavest M."/>
            <person name="Whitehead S."/>
            <person name="Yeats C."/>
            <person name="Barrell B.G."/>
            <person name="Oyston P.C.F."/>
            <person name="Parkhill J."/>
        </authorList>
    </citation>
    <scope>NUCLEOTIDE SEQUENCE [LARGE SCALE GENOMIC DNA]</scope>
    <source>
        <strain>K96243</strain>
    </source>
</reference>
<sequence>MKRAPTKQPAKPAARGGERAQGRVIAAHGRHYIVAPADGGSMLQCFPRGKKSEVAVGDRVAYERTSADQGVIVEIGERRNLLYRSDQFKSKLFAANLDQLLIVLATEPYFSEDLLGRALIAAEANELKPIVVLNKIDVEAALPVARERLAPYRALGYDVLELSVKGAPDDARAQLAPRLAGHSTILLGQSGMGKSTLVNLLVPDAEAATREISAALNSGRHTTTFTRLYPLQDGGALIDSPGFQEFGLYHLTEGRLERAFPEFRPLLAHCRFYNCHHLHEPGCAILEALADGRIAPTRHALYAQLVHEASQIVR</sequence>
<organism>
    <name type="scientific">Burkholderia pseudomallei (strain K96243)</name>
    <dbReference type="NCBI Taxonomy" id="272560"/>
    <lineage>
        <taxon>Bacteria</taxon>
        <taxon>Pseudomonadati</taxon>
        <taxon>Pseudomonadota</taxon>
        <taxon>Betaproteobacteria</taxon>
        <taxon>Burkholderiales</taxon>
        <taxon>Burkholderiaceae</taxon>
        <taxon>Burkholderia</taxon>
        <taxon>pseudomallei group</taxon>
    </lineage>
</organism>
<protein>
    <recommendedName>
        <fullName evidence="1">Small ribosomal subunit biogenesis GTPase RsgA</fullName>
        <ecNumber evidence="1">3.6.1.-</ecNumber>
    </recommendedName>
</protein>
<evidence type="ECO:0000255" key="1">
    <source>
        <dbReference type="HAMAP-Rule" id="MF_01820"/>
    </source>
</evidence>
<evidence type="ECO:0000255" key="2">
    <source>
        <dbReference type="PROSITE-ProRule" id="PRU01058"/>
    </source>
</evidence>
<evidence type="ECO:0000256" key="3">
    <source>
        <dbReference type="SAM" id="MobiDB-lite"/>
    </source>
</evidence>
<dbReference type="EC" id="3.6.1.-" evidence="1"/>
<dbReference type="EMBL" id="BX571965">
    <property type="protein sequence ID" value="CAH36489.1"/>
    <property type="molecule type" value="Genomic_DNA"/>
</dbReference>
<dbReference type="RefSeq" id="WP_004550124.1">
    <property type="nucleotide sequence ID" value="NC_006350.1"/>
</dbReference>
<dbReference type="RefSeq" id="YP_109078.1">
    <property type="nucleotide sequence ID" value="NC_006350.1"/>
</dbReference>
<dbReference type="SMR" id="Q63S39"/>
<dbReference type="STRING" id="272560.BPSL2483"/>
<dbReference type="KEGG" id="bps:BPSL2483"/>
<dbReference type="PATRIC" id="fig|272560.51.peg.2901"/>
<dbReference type="eggNOG" id="COG1162">
    <property type="taxonomic scope" value="Bacteria"/>
</dbReference>
<dbReference type="Proteomes" id="UP000000605">
    <property type="component" value="Chromosome 1"/>
</dbReference>
<dbReference type="GO" id="GO:0005737">
    <property type="term" value="C:cytoplasm"/>
    <property type="evidence" value="ECO:0007669"/>
    <property type="project" value="UniProtKB-SubCell"/>
</dbReference>
<dbReference type="GO" id="GO:0005525">
    <property type="term" value="F:GTP binding"/>
    <property type="evidence" value="ECO:0007669"/>
    <property type="project" value="UniProtKB-UniRule"/>
</dbReference>
<dbReference type="GO" id="GO:0003924">
    <property type="term" value="F:GTPase activity"/>
    <property type="evidence" value="ECO:0007669"/>
    <property type="project" value="UniProtKB-UniRule"/>
</dbReference>
<dbReference type="GO" id="GO:0046872">
    <property type="term" value="F:metal ion binding"/>
    <property type="evidence" value="ECO:0007669"/>
    <property type="project" value="UniProtKB-KW"/>
</dbReference>
<dbReference type="GO" id="GO:0019843">
    <property type="term" value="F:rRNA binding"/>
    <property type="evidence" value="ECO:0007669"/>
    <property type="project" value="UniProtKB-KW"/>
</dbReference>
<dbReference type="GO" id="GO:0042274">
    <property type="term" value="P:ribosomal small subunit biogenesis"/>
    <property type="evidence" value="ECO:0007669"/>
    <property type="project" value="UniProtKB-UniRule"/>
</dbReference>
<dbReference type="CDD" id="cd04466">
    <property type="entry name" value="S1_YloQ_GTPase"/>
    <property type="match status" value="1"/>
</dbReference>
<dbReference type="CDD" id="cd01854">
    <property type="entry name" value="YjeQ_EngC"/>
    <property type="match status" value="1"/>
</dbReference>
<dbReference type="Gene3D" id="2.40.50.140">
    <property type="entry name" value="Nucleic acid-binding proteins"/>
    <property type="match status" value="1"/>
</dbReference>
<dbReference type="Gene3D" id="3.40.50.300">
    <property type="entry name" value="P-loop containing nucleotide triphosphate hydrolases"/>
    <property type="match status" value="1"/>
</dbReference>
<dbReference type="Gene3D" id="1.10.40.50">
    <property type="entry name" value="Probable gtpase engc, domain 3"/>
    <property type="match status" value="1"/>
</dbReference>
<dbReference type="HAMAP" id="MF_01820">
    <property type="entry name" value="GTPase_RsgA"/>
    <property type="match status" value="1"/>
</dbReference>
<dbReference type="InterPro" id="IPR030378">
    <property type="entry name" value="G_CP_dom"/>
</dbReference>
<dbReference type="InterPro" id="IPR012340">
    <property type="entry name" value="NA-bd_OB-fold"/>
</dbReference>
<dbReference type="InterPro" id="IPR027417">
    <property type="entry name" value="P-loop_NTPase"/>
</dbReference>
<dbReference type="InterPro" id="IPR004881">
    <property type="entry name" value="Ribosome_biogen_GTPase_RsgA"/>
</dbReference>
<dbReference type="InterPro" id="IPR010914">
    <property type="entry name" value="RsgA_GTPase_dom"/>
</dbReference>
<dbReference type="InterPro" id="IPR031944">
    <property type="entry name" value="RsgA_N"/>
</dbReference>
<dbReference type="NCBIfam" id="TIGR00157">
    <property type="entry name" value="ribosome small subunit-dependent GTPase A"/>
    <property type="match status" value="1"/>
</dbReference>
<dbReference type="PANTHER" id="PTHR32120">
    <property type="entry name" value="SMALL RIBOSOMAL SUBUNIT BIOGENESIS GTPASE RSGA"/>
    <property type="match status" value="1"/>
</dbReference>
<dbReference type="PANTHER" id="PTHR32120:SF11">
    <property type="entry name" value="SMALL RIBOSOMAL SUBUNIT BIOGENESIS GTPASE RSGA 1, MITOCHONDRIAL-RELATED"/>
    <property type="match status" value="1"/>
</dbReference>
<dbReference type="Pfam" id="PF03193">
    <property type="entry name" value="RsgA_GTPase"/>
    <property type="match status" value="1"/>
</dbReference>
<dbReference type="SUPFAM" id="SSF50249">
    <property type="entry name" value="Nucleic acid-binding proteins"/>
    <property type="match status" value="1"/>
</dbReference>
<dbReference type="SUPFAM" id="SSF52540">
    <property type="entry name" value="P-loop containing nucleoside triphosphate hydrolases"/>
    <property type="match status" value="1"/>
</dbReference>
<dbReference type="PROSITE" id="PS50936">
    <property type="entry name" value="ENGC_GTPASE"/>
    <property type="match status" value="1"/>
</dbReference>
<dbReference type="PROSITE" id="PS51721">
    <property type="entry name" value="G_CP"/>
    <property type="match status" value="1"/>
</dbReference>
<keyword id="KW-0963">Cytoplasm</keyword>
<keyword id="KW-0342">GTP-binding</keyword>
<keyword id="KW-0378">Hydrolase</keyword>
<keyword id="KW-0479">Metal-binding</keyword>
<keyword id="KW-0547">Nucleotide-binding</keyword>
<keyword id="KW-1185">Reference proteome</keyword>
<keyword id="KW-0690">Ribosome biogenesis</keyword>
<keyword id="KW-0694">RNA-binding</keyword>
<keyword id="KW-0699">rRNA-binding</keyword>
<keyword id="KW-0862">Zinc</keyword>
<name>RSGA_BURPS</name>
<feature type="chain" id="PRO_1000216036" description="Small ribosomal subunit biogenesis GTPase RsgA">
    <location>
        <begin position="1"/>
        <end position="314"/>
    </location>
</feature>
<feature type="domain" description="CP-type G" evidence="2">
    <location>
        <begin position="85"/>
        <end position="246"/>
    </location>
</feature>
<feature type="region of interest" description="Disordered" evidence="3">
    <location>
        <begin position="1"/>
        <end position="20"/>
    </location>
</feature>
<feature type="binding site" evidence="1">
    <location>
        <begin position="134"/>
        <end position="137"/>
    </location>
    <ligand>
        <name>GTP</name>
        <dbReference type="ChEBI" id="CHEBI:37565"/>
    </ligand>
</feature>
<feature type="binding site" evidence="1">
    <location>
        <begin position="188"/>
        <end position="196"/>
    </location>
    <ligand>
        <name>GTP</name>
        <dbReference type="ChEBI" id="CHEBI:37565"/>
    </ligand>
</feature>
<feature type="binding site" evidence="1">
    <location>
        <position position="270"/>
    </location>
    <ligand>
        <name>Zn(2+)</name>
        <dbReference type="ChEBI" id="CHEBI:29105"/>
    </ligand>
</feature>
<feature type="binding site" evidence="1">
    <location>
        <position position="275"/>
    </location>
    <ligand>
        <name>Zn(2+)</name>
        <dbReference type="ChEBI" id="CHEBI:29105"/>
    </ligand>
</feature>
<feature type="binding site" evidence="1">
    <location>
        <position position="277"/>
    </location>
    <ligand>
        <name>Zn(2+)</name>
        <dbReference type="ChEBI" id="CHEBI:29105"/>
    </ligand>
</feature>
<feature type="binding site" evidence="1">
    <location>
        <position position="283"/>
    </location>
    <ligand>
        <name>Zn(2+)</name>
        <dbReference type="ChEBI" id="CHEBI:29105"/>
    </ligand>
</feature>
<gene>
    <name evidence="1" type="primary">rsgA</name>
    <name type="ordered locus">BPSL2483</name>
</gene>
<proteinExistence type="inferred from homology"/>
<comment type="function">
    <text evidence="1">One of several proteins that assist in the late maturation steps of the functional core of the 30S ribosomal subunit. Helps release RbfA from mature subunits. May play a role in the assembly of ribosomal proteins into the subunit. Circularly permuted GTPase that catalyzes slow GTP hydrolysis, GTPase activity is stimulated by the 30S ribosomal subunit.</text>
</comment>
<comment type="cofactor">
    <cofactor evidence="1">
        <name>Zn(2+)</name>
        <dbReference type="ChEBI" id="CHEBI:29105"/>
    </cofactor>
    <text evidence="1">Binds 1 zinc ion per subunit.</text>
</comment>
<comment type="subunit">
    <text evidence="1">Monomer. Associates with 30S ribosomal subunit, binds 16S rRNA.</text>
</comment>
<comment type="subcellular location">
    <subcellularLocation>
        <location evidence="1">Cytoplasm</location>
    </subcellularLocation>
</comment>
<comment type="similarity">
    <text evidence="1">Belongs to the TRAFAC class YlqF/YawG GTPase family. RsgA subfamily.</text>
</comment>
<accession>Q63S39</accession>